<feature type="chain" id="PRO_0000355487" description="Large ribosomal subunit protein bL20c">
    <location>
        <begin position="1"/>
        <end position="117"/>
    </location>
</feature>
<gene>
    <name evidence="1" type="primary">rpl20</name>
</gene>
<name>RK20_ARAHI</name>
<reference key="1">
    <citation type="submission" date="2007-03" db="EMBL/GenBank/DDBJ databases">
        <title>Sequencing analysis of Arabis hirsuta chloroplast DNA.</title>
        <authorList>
            <person name="Hosouchi T."/>
            <person name="Tsuruoka H."/>
            <person name="Kotani H."/>
        </authorList>
    </citation>
    <scope>NUCLEOTIDE SEQUENCE [LARGE SCALE GENOMIC DNA]</scope>
</reference>
<proteinExistence type="inferred from homology"/>
<dbReference type="EMBL" id="AP009369">
    <property type="protein sequence ID" value="BAF50046.1"/>
    <property type="molecule type" value="Genomic_DNA"/>
</dbReference>
<dbReference type="RefSeq" id="YP_001123222.1">
    <property type="nucleotide sequence ID" value="NC_009268.1"/>
</dbReference>
<dbReference type="SMR" id="A4QK41"/>
<dbReference type="GeneID" id="4962495"/>
<dbReference type="GO" id="GO:0009507">
    <property type="term" value="C:chloroplast"/>
    <property type="evidence" value="ECO:0007669"/>
    <property type="project" value="UniProtKB-SubCell"/>
</dbReference>
<dbReference type="GO" id="GO:1990904">
    <property type="term" value="C:ribonucleoprotein complex"/>
    <property type="evidence" value="ECO:0007669"/>
    <property type="project" value="UniProtKB-KW"/>
</dbReference>
<dbReference type="GO" id="GO:0005840">
    <property type="term" value="C:ribosome"/>
    <property type="evidence" value="ECO:0007669"/>
    <property type="project" value="UniProtKB-KW"/>
</dbReference>
<dbReference type="GO" id="GO:0019843">
    <property type="term" value="F:rRNA binding"/>
    <property type="evidence" value="ECO:0007669"/>
    <property type="project" value="UniProtKB-UniRule"/>
</dbReference>
<dbReference type="GO" id="GO:0003735">
    <property type="term" value="F:structural constituent of ribosome"/>
    <property type="evidence" value="ECO:0007669"/>
    <property type="project" value="InterPro"/>
</dbReference>
<dbReference type="GO" id="GO:0000027">
    <property type="term" value="P:ribosomal large subunit assembly"/>
    <property type="evidence" value="ECO:0007669"/>
    <property type="project" value="UniProtKB-UniRule"/>
</dbReference>
<dbReference type="GO" id="GO:0006412">
    <property type="term" value="P:translation"/>
    <property type="evidence" value="ECO:0007669"/>
    <property type="project" value="InterPro"/>
</dbReference>
<dbReference type="CDD" id="cd07026">
    <property type="entry name" value="Ribosomal_L20"/>
    <property type="match status" value="1"/>
</dbReference>
<dbReference type="FunFam" id="1.10.1900.20:FF:000001">
    <property type="entry name" value="50S ribosomal protein L20"/>
    <property type="match status" value="1"/>
</dbReference>
<dbReference type="Gene3D" id="6.10.160.10">
    <property type="match status" value="1"/>
</dbReference>
<dbReference type="Gene3D" id="1.10.1900.20">
    <property type="entry name" value="Ribosomal protein L20"/>
    <property type="match status" value="1"/>
</dbReference>
<dbReference type="HAMAP" id="MF_00382">
    <property type="entry name" value="Ribosomal_bL20"/>
    <property type="match status" value="1"/>
</dbReference>
<dbReference type="InterPro" id="IPR005813">
    <property type="entry name" value="Ribosomal_bL20"/>
</dbReference>
<dbReference type="InterPro" id="IPR049946">
    <property type="entry name" value="RIBOSOMAL_L20_CS"/>
</dbReference>
<dbReference type="InterPro" id="IPR035566">
    <property type="entry name" value="Ribosomal_protein_bL20_C"/>
</dbReference>
<dbReference type="NCBIfam" id="TIGR01032">
    <property type="entry name" value="rplT_bact"/>
    <property type="match status" value="1"/>
</dbReference>
<dbReference type="PANTHER" id="PTHR10986">
    <property type="entry name" value="39S RIBOSOMAL PROTEIN L20"/>
    <property type="match status" value="1"/>
</dbReference>
<dbReference type="Pfam" id="PF00453">
    <property type="entry name" value="Ribosomal_L20"/>
    <property type="match status" value="1"/>
</dbReference>
<dbReference type="PRINTS" id="PR00062">
    <property type="entry name" value="RIBOSOMALL20"/>
</dbReference>
<dbReference type="SUPFAM" id="SSF74731">
    <property type="entry name" value="Ribosomal protein L20"/>
    <property type="match status" value="1"/>
</dbReference>
<dbReference type="PROSITE" id="PS00937">
    <property type="entry name" value="RIBOSOMAL_L20"/>
    <property type="match status" value="1"/>
</dbReference>
<accession>A4QK41</accession>
<organism>
    <name type="scientific">Arabis hirsuta</name>
    <name type="common">Hairy rock-cress</name>
    <name type="synonym">Turritis hirsuta</name>
    <dbReference type="NCBI Taxonomy" id="78191"/>
    <lineage>
        <taxon>Eukaryota</taxon>
        <taxon>Viridiplantae</taxon>
        <taxon>Streptophyta</taxon>
        <taxon>Embryophyta</taxon>
        <taxon>Tracheophyta</taxon>
        <taxon>Spermatophyta</taxon>
        <taxon>Magnoliopsida</taxon>
        <taxon>eudicotyledons</taxon>
        <taxon>Gunneridae</taxon>
        <taxon>Pentapetalae</taxon>
        <taxon>rosids</taxon>
        <taxon>malvids</taxon>
        <taxon>Brassicales</taxon>
        <taxon>Brassicaceae</taxon>
        <taxon>Arabideae</taxon>
        <taxon>Arabis</taxon>
    </lineage>
</organism>
<geneLocation type="chloroplast"/>
<keyword id="KW-0150">Chloroplast</keyword>
<keyword id="KW-0934">Plastid</keyword>
<keyword id="KW-0687">Ribonucleoprotein</keyword>
<keyword id="KW-0689">Ribosomal protein</keyword>
<keyword id="KW-0694">RNA-binding</keyword>
<keyword id="KW-0699">rRNA-binding</keyword>
<evidence type="ECO:0000255" key="1">
    <source>
        <dbReference type="HAMAP-Rule" id="MF_00382"/>
    </source>
</evidence>
<evidence type="ECO:0000305" key="2"/>
<protein>
    <recommendedName>
        <fullName evidence="1">Large ribosomal subunit protein bL20c</fullName>
    </recommendedName>
    <alternativeName>
        <fullName evidence="2">50S ribosomal protein L20, chloroplastic</fullName>
    </alternativeName>
</protein>
<sequence length="117" mass="14149">MTRIKRGYIARRRRTKLRLFASSFRGAHSRLTRTMTQQRIRALVSAHRDRGKRKRDFRRLWITRLNAVIHETGVFHSYNRFIHNLYKKQLLLNRKILAQIALLNRSCLYTISNEIKE</sequence>
<comment type="function">
    <text evidence="1">Binds directly to 23S ribosomal RNA and is necessary for the in vitro assembly process of the 50S ribosomal subunit. It is not involved in the protein synthesizing functions of that subunit.</text>
</comment>
<comment type="subcellular location">
    <subcellularLocation>
        <location>Plastid</location>
        <location>Chloroplast</location>
    </subcellularLocation>
</comment>
<comment type="similarity">
    <text evidence="1">Belongs to the bacterial ribosomal protein bL20 family.</text>
</comment>